<proteinExistence type="inferred from homology"/>
<dbReference type="EMBL" id="BA000033">
    <property type="protein sequence ID" value="BAB94853.1"/>
    <property type="molecule type" value="Genomic_DNA"/>
</dbReference>
<dbReference type="RefSeq" id="WP_001060842.1">
    <property type="nucleotide sequence ID" value="NC_003923.1"/>
</dbReference>
<dbReference type="SMR" id="Q7A166"/>
<dbReference type="KEGG" id="sam:MW0988"/>
<dbReference type="HOGENOM" id="CLU_020088_2_0_9"/>
<dbReference type="GO" id="GO:0005886">
    <property type="term" value="C:plasma membrane"/>
    <property type="evidence" value="ECO:0007669"/>
    <property type="project" value="UniProtKB-SubCell"/>
</dbReference>
<dbReference type="GO" id="GO:0015086">
    <property type="term" value="F:cadmium ion transmembrane transporter activity"/>
    <property type="evidence" value="ECO:0007669"/>
    <property type="project" value="TreeGrafter"/>
</dbReference>
<dbReference type="GO" id="GO:0005384">
    <property type="term" value="F:manganese ion transmembrane transporter activity"/>
    <property type="evidence" value="ECO:0007669"/>
    <property type="project" value="TreeGrafter"/>
</dbReference>
<dbReference type="GO" id="GO:0046872">
    <property type="term" value="F:metal ion binding"/>
    <property type="evidence" value="ECO:0007669"/>
    <property type="project" value="UniProtKB-UniRule"/>
</dbReference>
<dbReference type="GO" id="GO:0015293">
    <property type="term" value="F:symporter activity"/>
    <property type="evidence" value="ECO:0007669"/>
    <property type="project" value="UniProtKB-UniRule"/>
</dbReference>
<dbReference type="GO" id="GO:0034755">
    <property type="term" value="P:iron ion transmembrane transport"/>
    <property type="evidence" value="ECO:0007669"/>
    <property type="project" value="TreeGrafter"/>
</dbReference>
<dbReference type="HAMAP" id="MF_00221">
    <property type="entry name" value="NRAMP"/>
    <property type="match status" value="1"/>
</dbReference>
<dbReference type="InterPro" id="IPR001046">
    <property type="entry name" value="NRAMP_fam"/>
</dbReference>
<dbReference type="NCBIfam" id="TIGR01197">
    <property type="entry name" value="nramp"/>
    <property type="match status" value="1"/>
</dbReference>
<dbReference type="NCBIfam" id="NF037982">
    <property type="entry name" value="Nramp_1"/>
    <property type="match status" value="1"/>
</dbReference>
<dbReference type="NCBIfam" id="NF001923">
    <property type="entry name" value="PRK00701.1"/>
    <property type="match status" value="1"/>
</dbReference>
<dbReference type="PANTHER" id="PTHR11706:SF33">
    <property type="entry name" value="NATURAL RESISTANCE-ASSOCIATED MACROPHAGE PROTEIN 2"/>
    <property type="match status" value="1"/>
</dbReference>
<dbReference type="PANTHER" id="PTHR11706">
    <property type="entry name" value="SOLUTE CARRIER PROTEIN FAMILY 11 MEMBER"/>
    <property type="match status" value="1"/>
</dbReference>
<dbReference type="Pfam" id="PF01566">
    <property type="entry name" value="Nramp"/>
    <property type="match status" value="1"/>
</dbReference>
<dbReference type="PRINTS" id="PR00447">
    <property type="entry name" value="NATRESASSCMP"/>
</dbReference>
<keyword id="KW-1003">Cell membrane</keyword>
<keyword id="KW-0406">Ion transport</keyword>
<keyword id="KW-0472">Membrane</keyword>
<keyword id="KW-0769">Symport</keyword>
<keyword id="KW-0812">Transmembrane</keyword>
<keyword id="KW-1133">Transmembrane helix</keyword>
<keyword id="KW-0813">Transport</keyword>
<name>MNTH_STAAW</name>
<protein>
    <recommendedName>
        <fullName evidence="1">Divalent metal cation transporter MntH</fullName>
    </recommendedName>
</protein>
<evidence type="ECO:0000255" key="1">
    <source>
        <dbReference type="HAMAP-Rule" id="MF_00221"/>
    </source>
</evidence>
<accession>Q7A166</accession>
<comment type="function">
    <text evidence="1">H(+)-stimulated, divalent metal cation uptake system.</text>
</comment>
<comment type="subcellular location">
    <subcellularLocation>
        <location evidence="1">Cell membrane</location>
        <topology evidence="1">Multi-pass membrane protein</topology>
    </subcellularLocation>
</comment>
<comment type="similarity">
    <text evidence="1">Belongs to the NRAMP family.</text>
</comment>
<reference key="1">
    <citation type="journal article" date="2002" name="Lancet">
        <title>Genome and virulence determinants of high virulence community-acquired MRSA.</title>
        <authorList>
            <person name="Baba T."/>
            <person name="Takeuchi F."/>
            <person name="Kuroda M."/>
            <person name="Yuzawa H."/>
            <person name="Aoki K."/>
            <person name="Oguchi A."/>
            <person name="Nagai Y."/>
            <person name="Iwama N."/>
            <person name="Asano K."/>
            <person name="Naimi T."/>
            <person name="Kuroda H."/>
            <person name="Cui L."/>
            <person name="Yamamoto K."/>
            <person name="Hiramatsu K."/>
        </authorList>
    </citation>
    <scope>NUCLEOTIDE SEQUENCE [LARGE SCALE GENOMIC DNA]</scope>
    <source>
        <strain>MW2</strain>
    </source>
</reference>
<sequence length="450" mass="49724">MNNKRHSTNEQLSLDEINNTIKFDHRSSNKQKFLSFLGPGLLVAVGYMDPGNWITSMQGGAQYGYTLLFVILISSLSAMLLQSMTVRLGIATGMDLAQMTRHYLSRPIAIIFWIIAELAIIATDIAEVIGSAIALNLLFNIPLIVGALITVLDVFLLLFIMKYGFRKIEAIVGTLIFTVLFIFIFEVYISSPQLNAVLNGFIPHSEIITNNGILYIALGIIGATIMPHNLYLHSSIVQSRTYSRHNNEEKAQAIKFATIDSNIQLSIAFVVNCLLLVLGASLFFNSNADDLGGFYDLYHALKTEPVLGATMGAIMSTLFAVALLASGQNSTITGTLAGQIVMEGFLRLHIPNWLRRLITRSLAVIPVIVCLIIFKGNAAKIEQLLVFSQVFLSIALPFCLIPLQLATSNKDLMGPFYNKTWVNIISWTLIIILSILNVYLIVQTFQELQS</sequence>
<gene>
    <name evidence="1" type="primary">mntH</name>
    <name type="ordered locus">MW0988</name>
</gene>
<organism>
    <name type="scientific">Staphylococcus aureus (strain MW2)</name>
    <dbReference type="NCBI Taxonomy" id="196620"/>
    <lineage>
        <taxon>Bacteria</taxon>
        <taxon>Bacillati</taxon>
        <taxon>Bacillota</taxon>
        <taxon>Bacilli</taxon>
        <taxon>Bacillales</taxon>
        <taxon>Staphylococcaceae</taxon>
        <taxon>Staphylococcus</taxon>
    </lineage>
</organism>
<feature type="chain" id="PRO_0000212639" description="Divalent metal cation transporter MntH">
    <location>
        <begin position="1"/>
        <end position="450"/>
    </location>
</feature>
<feature type="transmembrane region" description="Helical" evidence="1">
    <location>
        <begin position="34"/>
        <end position="54"/>
    </location>
</feature>
<feature type="transmembrane region" description="Helical" evidence="1">
    <location>
        <begin position="61"/>
        <end position="81"/>
    </location>
</feature>
<feature type="transmembrane region" description="Helical" evidence="1">
    <location>
        <begin position="108"/>
        <end position="128"/>
    </location>
</feature>
<feature type="transmembrane region" description="Helical" evidence="1">
    <location>
        <begin position="141"/>
        <end position="161"/>
    </location>
</feature>
<feature type="transmembrane region" description="Helical" evidence="1">
    <location>
        <begin position="170"/>
        <end position="190"/>
    </location>
</feature>
<feature type="transmembrane region" description="Helical" evidence="1">
    <location>
        <begin position="212"/>
        <end position="232"/>
    </location>
</feature>
<feature type="transmembrane region" description="Helical" evidence="1">
    <location>
        <begin position="263"/>
        <end position="283"/>
    </location>
</feature>
<feature type="transmembrane region" description="Helical" evidence="1">
    <location>
        <begin position="305"/>
        <end position="325"/>
    </location>
</feature>
<feature type="transmembrane region" description="Helical" evidence="1">
    <location>
        <begin position="361"/>
        <end position="381"/>
    </location>
</feature>
<feature type="transmembrane region" description="Helical" evidence="1">
    <location>
        <begin position="383"/>
        <end position="403"/>
    </location>
</feature>
<feature type="transmembrane region" description="Helical" evidence="1">
    <location>
        <begin position="422"/>
        <end position="442"/>
    </location>
</feature>